<sequence>MANHKSAEKRNRQNQVARLRNKSTRTAMKNSVRKLDEALEAGVEADTAEALRGAISRIAKTASKGVIHKKTASRKISRLTKRVNALVAA</sequence>
<comment type="function">
    <text evidence="1">Binds directly to 16S ribosomal RNA.</text>
</comment>
<comment type="similarity">
    <text evidence="1">Belongs to the bacterial ribosomal protein bS20 family.</text>
</comment>
<feature type="chain" id="PRO_0000167956" description="Small ribosomal subunit protein bS20">
    <location>
        <begin position="1"/>
        <end position="89"/>
    </location>
</feature>
<feature type="region of interest" description="Disordered" evidence="2">
    <location>
        <begin position="1"/>
        <end position="30"/>
    </location>
</feature>
<feature type="compositionally biased region" description="Basic and acidic residues" evidence="2">
    <location>
        <begin position="1"/>
        <end position="11"/>
    </location>
</feature>
<name>RS20_DESPS</name>
<dbReference type="EMBL" id="CR522870">
    <property type="protein sequence ID" value="CAG36347.1"/>
    <property type="molecule type" value="Genomic_DNA"/>
</dbReference>
<dbReference type="RefSeq" id="WP_011188859.1">
    <property type="nucleotide sequence ID" value="NC_006138.1"/>
</dbReference>
<dbReference type="SMR" id="Q6AMS8"/>
<dbReference type="STRING" id="177439.DP1618"/>
<dbReference type="KEGG" id="dps:DP1618"/>
<dbReference type="eggNOG" id="COG0268">
    <property type="taxonomic scope" value="Bacteria"/>
</dbReference>
<dbReference type="HOGENOM" id="CLU_160655_3_1_7"/>
<dbReference type="OrthoDB" id="9807974at2"/>
<dbReference type="Proteomes" id="UP000000602">
    <property type="component" value="Chromosome"/>
</dbReference>
<dbReference type="GO" id="GO:0005829">
    <property type="term" value="C:cytosol"/>
    <property type="evidence" value="ECO:0007669"/>
    <property type="project" value="TreeGrafter"/>
</dbReference>
<dbReference type="GO" id="GO:0015935">
    <property type="term" value="C:small ribosomal subunit"/>
    <property type="evidence" value="ECO:0007669"/>
    <property type="project" value="TreeGrafter"/>
</dbReference>
<dbReference type="GO" id="GO:0070181">
    <property type="term" value="F:small ribosomal subunit rRNA binding"/>
    <property type="evidence" value="ECO:0007669"/>
    <property type="project" value="TreeGrafter"/>
</dbReference>
<dbReference type="GO" id="GO:0003735">
    <property type="term" value="F:structural constituent of ribosome"/>
    <property type="evidence" value="ECO:0007669"/>
    <property type="project" value="InterPro"/>
</dbReference>
<dbReference type="GO" id="GO:0006412">
    <property type="term" value="P:translation"/>
    <property type="evidence" value="ECO:0007669"/>
    <property type="project" value="UniProtKB-UniRule"/>
</dbReference>
<dbReference type="FunFam" id="1.20.58.110:FF:000001">
    <property type="entry name" value="30S ribosomal protein S20"/>
    <property type="match status" value="1"/>
</dbReference>
<dbReference type="Gene3D" id="1.20.58.110">
    <property type="entry name" value="Ribosomal protein S20"/>
    <property type="match status" value="1"/>
</dbReference>
<dbReference type="HAMAP" id="MF_00500">
    <property type="entry name" value="Ribosomal_bS20"/>
    <property type="match status" value="1"/>
</dbReference>
<dbReference type="InterPro" id="IPR002583">
    <property type="entry name" value="Ribosomal_bS20"/>
</dbReference>
<dbReference type="InterPro" id="IPR036510">
    <property type="entry name" value="Ribosomal_bS20_sf"/>
</dbReference>
<dbReference type="NCBIfam" id="TIGR00029">
    <property type="entry name" value="S20"/>
    <property type="match status" value="1"/>
</dbReference>
<dbReference type="PANTHER" id="PTHR33398">
    <property type="entry name" value="30S RIBOSOMAL PROTEIN S20"/>
    <property type="match status" value="1"/>
</dbReference>
<dbReference type="PANTHER" id="PTHR33398:SF1">
    <property type="entry name" value="SMALL RIBOSOMAL SUBUNIT PROTEIN BS20C"/>
    <property type="match status" value="1"/>
</dbReference>
<dbReference type="Pfam" id="PF01649">
    <property type="entry name" value="Ribosomal_S20p"/>
    <property type="match status" value="1"/>
</dbReference>
<dbReference type="SUPFAM" id="SSF46992">
    <property type="entry name" value="Ribosomal protein S20"/>
    <property type="match status" value="1"/>
</dbReference>
<accession>Q6AMS8</accession>
<keyword id="KW-1185">Reference proteome</keyword>
<keyword id="KW-0687">Ribonucleoprotein</keyword>
<keyword id="KW-0689">Ribosomal protein</keyword>
<keyword id="KW-0694">RNA-binding</keyword>
<keyword id="KW-0699">rRNA-binding</keyword>
<proteinExistence type="inferred from homology"/>
<protein>
    <recommendedName>
        <fullName evidence="1">Small ribosomal subunit protein bS20</fullName>
    </recommendedName>
    <alternativeName>
        <fullName evidence="3">30S ribosomal protein S20</fullName>
    </alternativeName>
</protein>
<evidence type="ECO:0000255" key="1">
    <source>
        <dbReference type="HAMAP-Rule" id="MF_00500"/>
    </source>
</evidence>
<evidence type="ECO:0000256" key="2">
    <source>
        <dbReference type="SAM" id="MobiDB-lite"/>
    </source>
</evidence>
<evidence type="ECO:0000305" key="3"/>
<gene>
    <name evidence="1" type="primary">rpsT</name>
    <name type="ordered locus">DP1618</name>
</gene>
<reference key="1">
    <citation type="journal article" date="2004" name="Environ. Microbiol.">
        <title>The genome of Desulfotalea psychrophila, a sulfate-reducing bacterium from permanently cold Arctic sediments.</title>
        <authorList>
            <person name="Rabus R."/>
            <person name="Ruepp A."/>
            <person name="Frickey T."/>
            <person name="Rattei T."/>
            <person name="Fartmann B."/>
            <person name="Stark M."/>
            <person name="Bauer M."/>
            <person name="Zibat A."/>
            <person name="Lombardot T."/>
            <person name="Becker I."/>
            <person name="Amann J."/>
            <person name="Gellner K."/>
            <person name="Teeling H."/>
            <person name="Leuschner W.D."/>
            <person name="Gloeckner F.-O."/>
            <person name="Lupas A.N."/>
            <person name="Amann R."/>
            <person name="Klenk H.-P."/>
        </authorList>
    </citation>
    <scope>NUCLEOTIDE SEQUENCE [LARGE SCALE GENOMIC DNA]</scope>
    <source>
        <strain>DSM 12343 / LSv54</strain>
    </source>
</reference>
<organism>
    <name type="scientific">Desulfotalea psychrophila (strain LSv54 / DSM 12343)</name>
    <dbReference type="NCBI Taxonomy" id="177439"/>
    <lineage>
        <taxon>Bacteria</taxon>
        <taxon>Pseudomonadati</taxon>
        <taxon>Thermodesulfobacteriota</taxon>
        <taxon>Desulfobulbia</taxon>
        <taxon>Desulfobulbales</taxon>
        <taxon>Desulfocapsaceae</taxon>
        <taxon>Desulfotalea</taxon>
    </lineage>
</organism>